<proteinExistence type="inferred from homology"/>
<gene>
    <name evidence="1" type="primary">leuS</name>
    <name type="ordered locus">VP0727</name>
</gene>
<name>SYL_VIBPA</name>
<keyword id="KW-0030">Aminoacyl-tRNA synthetase</keyword>
<keyword id="KW-0067">ATP-binding</keyword>
<keyword id="KW-0963">Cytoplasm</keyword>
<keyword id="KW-0436">Ligase</keyword>
<keyword id="KW-0547">Nucleotide-binding</keyword>
<keyword id="KW-0648">Protein biosynthesis</keyword>
<dbReference type="EC" id="6.1.1.4" evidence="1"/>
<dbReference type="EMBL" id="BA000031">
    <property type="protein sequence ID" value="BAC58990.1"/>
    <property type="molecule type" value="Genomic_DNA"/>
</dbReference>
<dbReference type="RefSeq" id="NP_797106.1">
    <property type="nucleotide sequence ID" value="NC_004603.1"/>
</dbReference>
<dbReference type="RefSeq" id="WP_005454506.1">
    <property type="nucleotide sequence ID" value="NC_004603.1"/>
</dbReference>
<dbReference type="SMR" id="Q87RQ0"/>
<dbReference type="GeneID" id="1188202"/>
<dbReference type="KEGG" id="vpa:VP0727"/>
<dbReference type="PATRIC" id="fig|223926.6.peg.696"/>
<dbReference type="eggNOG" id="COG0495">
    <property type="taxonomic scope" value="Bacteria"/>
</dbReference>
<dbReference type="HOGENOM" id="CLU_004427_0_0_6"/>
<dbReference type="Proteomes" id="UP000002493">
    <property type="component" value="Chromosome 1"/>
</dbReference>
<dbReference type="GO" id="GO:0005829">
    <property type="term" value="C:cytosol"/>
    <property type="evidence" value="ECO:0007669"/>
    <property type="project" value="TreeGrafter"/>
</dbReference>
<dbReference type="GO" id="GO:0002161">
    <property type="term" value="F:aminoacyl-tRNA deacylase activity"/>
    <property type="evidence" value="ECO:0007669"/>
    <property type="project" value="InterPro"/>
</dbReference>
<dbReference type="GO" id="GO:0005524">
    <property type="term" value="F:ATP binding"/>
    <property type="evidence" value="ECO:0007669"/>
    <property type="project" value="UniProtKB-UniRule"/>
</dbReference>
<dbReference type="GO" id="GO:0004823">
    <property type="term" value="F:leucine-tRNA ligase activity"/>
    <property type="evidence" value="ECO:0007669"/>
    <property type="project" value="UniProtKB-UniRule"/>
</dbReference>
<dbReference type="GO" id="GO:0006429">
    <property type="term" value="P:leucyl-tRNA aminoacylation"/>
    <property type="evidence" value="ECO:0007669"/>
    <property type="project" value="UniProtKB-UniRule"/>
</dbReference>
<dbReference type="CDD" id="cd07958">
    <property type="entry name" value="Anticodon_Ia_Leu_BEm"/>
    <property type="match status" value="1"/>
</dbReference>
<dbReference type="CDD" id="cd00812">
    <property type="entry name" value="LeuRS_core"/>
    <property type="match status" value="1"/>
</dbReference>
<dbReference type="FunFam" id="1.10.730.10:FF:000002">
    <property type="entry name" value="Leucine--tRNA ligase"/>
    <property type="match status" value="2"/>
</dbReference>
<dbReference type="FunFam" id="2.20.28.290:FF:000001">
    <property type="entry name" value="Leucine--tRNA ligase"/>
    <property type="match status" value="1"/>
</dbReference>
<dbReference type="FunFam" id="3.10.20.590:FF:000001">
    <property type="entry name" value="Leucine--tRNA ligase"/>
    <property type="match status" value="1"/>
</dbReference>
<dbReference type="FunFam" id="3.40.50.620:FF:000003">
    <property type="entry name" value="Leucine--tRNA ligase"/>
    <property type="match status" value="1"/>
</dbReference>
<dbReference type="FunFam" id="3.40.50.620:FF:000051">
    <property type="entry name" value="Leucine--tRNA ligase"/>
    <property type="match status" value="1"/>
</dbReference>
<dbReference type="FunFam" id="3.90.740.10:FF:000012">
    <property type="entry name" value="Leucine--tRNA ligase"/>
    <property type="match status" value="1"/>
</dbReference>
<dbReference type="Gene3D" id="2.20.28.290">
    <property type="match status" value="1"/>
</dbReference>
<dbReference type="Gene3D" id="3.10.20.590">
    <property type="match status" value="1"/>
</dbReference>
<dbReference type="Gene3D" id="3.40.50.620">
    <property type="entry name" value="HUPs"/>
    <property type="match status" value="2"/>
</dbReference>
<dbReference type="Gene3D" id="1.10.730.10">
    <property type="entry name" value="Isoleucyl-tRNA Synthetase, Domain 1"/>
    <property type="match status" value="1"/>
</dbReference>
<dbReference type="Gene3D" id="3.90.740.10">
    <property type="entry name" value="Valyl/Leucyl/Isoleucyl-tRNA synthetase, editing domain"/>
    <property type="match status" value="1"/>
</dbReference>
<dbReference type="HAMAP" id="MF_00049_B">
    <property type="entry name" value="Leu_tRNA_synth_B"/>
    <property type="match status" value="1"/>
</dbReference>
<dbReference type="InterPro" id="IPR001412">
    <property type="entry name" value="aa-tRNA-synth_I_CS"/>
</dbReference>
<dbReference type="InterPro" id="IPR002300">
    <property type="entry name" value="aa-tRNA-synth_Ia"/>
</dbReference>
<dbReference type="InterPro" id="IPR002302">
    <property type="entry name" value="Leu-tRNA-ligase"/>
</dbReference>
<dbReference type="InterPro" id="IPR025709">
    <property type="entry name" value="Leu_tRNA-synth_edit"/>
</dbReference>
<dbReference type="InterPro" id="IPR013155">
    <property type="entry name" value="M/V/L/I-tRNA-synth_anticd-bd"/>
</dbReference>
<dbReference type="InterPro" id="IPR015413">
    <property type="entry name" value="Methionyl/Leucyl_tRNA_Synth"/>
</dbReference>
<dbReference type="InterPro" id="IPR014729">
    <property type="entry name" value="Rossmann-like_a/b/a_fold"/>
</dbReference>
<dbReference type="InterPro" id="IPR009080">
    <property type="entry name" value="tRNAsynth_Ia_anticodon-bd"/>
</dbReference>
<dbReference type="InterPro" id="IPR009008">
    <property type="entry name" value="Val/Leu/Ile-tRNA-synth_edit"/>
</dbReference>
<dbReference type="NCBIfam" id="TIGR00396">
    <property type="entry name" value="leuS_bact"/>
    <property type="match status" value="1"/>
</dbReference>
<dbReference type="PANTHER" id="PTHR43740:SF2">
    <property type="entry name" value="LEUCINE--TRNA LIGASE, MITOCHONDRIAL"/>
    <property type="match status" value="1"/>
</dbReference>
<dbReference type="PANTHER" id="PTHR43740">
    <property type="entry name" value="LEUCYL-TRNA SYNTHETASE"/>
    <property type="match status" value="1"/>
</dbReference>
<dbReference type="Pfam" id="PF08264">
    <property type="entry name" value="Anticodon_1"/>
    <property type="match status" value="1"/>
</dbReference>
<dbReference type="Pfam" id="PF00133">
    <property type="entry name" value="tRNA-synt_1"/>
    <property type="match status" value="2"/>
</dbReference>
<dbReference type="Pfam" id="PF13603">
    <property type="entry name" value="tRNA-synt_1_2"/>
    <property type="match status" value="1"/>
</dbReference>
<dbReference type="Pfam" id="PF09334">
    <property type="entry name" value="tRNA-synt_1g"/>
    <property type="match status" value="1"/>
</dbReference>
<dbReference type="PRINTS" id="PR00985">
    <property type="entry name" value="TRNASYNTHLEU"/>
</dbReference>
<dbReference type="SUPFAM" id="SSF47323">
    <property type="entry name" value="Anticodon-binding domain of a subclass of class I aminoacyl-tRNA synthetases"/>
    <property type="match status" value="1"/>
</dbReference>
<dbReference type="SUPFAM" id="SSF52374">
    <property type="entry name" value="Nucleotidylyl transferase"/>
    <property type="match status" value="1"/>
</dbReference>
<dbReference type="SUPFAM" id="SSF50677">
    <property type="entry name" value="ValRS/IleRS/LeuRS editing domain"/>
    <property type="match status" value="1"/>
</dbReference>
<dbReference type="PROSITE" id="PS00178">
    <property type="entry name" value="AA_TRNA_LIGASE_I"/>
    <property type="match status" value="1"/>
</dbReference>
<accession>Q87RQ0</accession>
<sequence length="857" mass="96654">MQEQYNPQDIEQKVQKHWDDNKTFVVSEDPNKEKFYCLSMFPYPSGRLHMGHVRNYTIGDVVSRFQRLQGKNVMQPIGWDAFGLPAENAAVKNNTAPAPWTYENIEYMKNQLKLLGFGYDWNREFATCTPEYYRWEQEFFTKLYEKGLVYKKTSSVNWCPNDQTVLANEQVEDGCCWRCDTPVEQKEIPQWFIKITEYAQELLDDLDKLEGWPEMVKTMQRNWIGRSEGVELKFEVKGQQDLEVYTTRPDTLMGVTYVGIAAGHPLATLAAENNPELAAFIEECKNTKVAEAELATMEKKGMATGLTAIHPLNGREVPVYVANFVLMDYGTGAVMAVPAHDQRDFEFATKYGLDIIPVIKPADGSELDISEAAYTEKGVLFDSGEFDGLEFQAAFDAIAAKLEAEGKGTKTVNFRLRDWGVSRQRYWGAPIPMVTTEDGEVHPVPADQLPVILPEDVVMDGVTSPIKADKEWAKTTFNGEPALRETDTFDTFMESSWYYARYCSPQADDILDPEKANYWLPVDQYIGGIEHACMHLLYSRFFHKLLRDAGYVTSDEPFKQLLCQGMVLADAFYFENEKGGKEWVAPTDVAVERDGKGRIISAKDNEGRDVTHSGMIKMSKSKNNGIDPQEMVDKYGADTVRLFMMFASPADMTLEWQESGVEGANRFLKRVWKLVKEHAEKGAAEAVDTAALSGEQKALRRDVHKTIAKVTDDIARRQTFNTAIAAIMELMNKLAKAPQESAQDRAILDEALKAVVTMLYPITPHISYELWTALGESDIDNAAWPTFDEKALVEDEKTIVVQVNGKLRAKLTVAADATKEQVEELGLNDENVTKFTDGLTIRKVIYVPGKLLNIVAN</sequence>
<protein>
    <recommendedName>
        <fullName evidence="1">Leucine--tRNA ligase</fullName>
        <ecNumber evidence="1">6.1.1.4</ecNumber>
    </recommendedName>
    <alternativeName>
        <fullName evidence="1">Leucyl-tRNA synthetase</fullName>
        <shortName evidence="1">LeuRS</shortName>
    </alternativeName>
</protein>
<evidence type="ECO:0000255" key="1">
    <source>
        <dbReference type="HAMAP-Rule" id="MF_00049"/>
    </source>
</evidence>
<feature type="chain" id="PRO_0000152114" description="Leucine--tRNA ligase">
    <location>
        <begin position="1"/>
        <end position="857"/>
    </location>
</feature>
<feature type="short sequence motif" description="'HIGH' region">
    <location>
        <begin position="42"/>
        <end position="52"/>
    </location>
</feature>
<feature type="short sequence motif" description="'KMSKS' region">
    <location>
        <begin position="617"/>
        <end position="621"/>
    </location>
</feature>
<feature type="binding site" evidence="1">
    <location>
        <position position="620"/>
    </location>
    <ligand>
        <name>ATP</name>
        <dbReference type="ChEBI" id="CHEBI:30616"/>
    </ligand>
</feature>
<reference key="1">
    <citation type="journal article" date="2003" name="Lancet">
        <title>Genome sequence of Vibrio parahaemolyticus: a pathogenic mechanism distinct from that of V. cholerae.</title>
        <authorList>
            <person name="Makino K."/>
            <person name="Oshima K."/>
            <person name="Kurokawa K."/>
            <person name="Yokoyama K."/>
            <person name="Uda T."/>
            <person name="Tagomori K."/>
            <person name="Iijima Y."/>
            <person name="Najima M."/>
            <person name="Nakano M."/>
            <person name="Yamashita A."/>
            <person name="Kubota Y."/>
            <person name="Kimura S."/>
            <person name="Yasunaga T."/>
            <person name="Honda T."/>
            <person name="Shinagawa H."/>
            <person name="Hattori M."/>
            <person name="Iida T."/>
        </authorList>
    </citation>
    <scope>NUCLEOTIDE SEQUENCE [LARGE SCALE GENOMIC DNA]</scope>
    <source>
        <strain>RIMD 2210633</strain>
    </source>
</reference>
<comment type="catalytic activity">
    <reaction evidence="1">
        <text>tRNA(Leu) + L-leucine + ATP = L-leucyl-tRNA(Leu) + AMP + diphosphate</text>
        <dbReference type="Rhea" id="RHEA:11688"/>
        <dbReference type="Rhea" id="RHEA-COMP:9613"/>
        <dbReference type="Rhea" id="RHEA-COMP:9622"/>
        <dbReference type="ChEBI" id="CHEBI:30616"/>
        <dbReference type="ChEBI" id="CHEBI:33019"/>
        <dbReference type="ChEBI" id="CHEBI:57427"/>
        <dbReference type="ChEBI" id="CHEBI:78442"/>
        <dbReference type="ChEBI" id="CHEBI:78494"/>
        <dbReference type="ChEBI" id="CHEBI:456215"/>
        <dbReference type="EC" id="6.1.1.4"/>
    </reaction>
</comment>
<comment type="subcellular location">
    <subcellularLocation>
        <location evidence="1">Cytoplasm</location>
    </subcellularLocation>
</comment>
<comment type="similarity">
    <text evidence="1">Belongs to the class-I aminoacyl-tRNA synthetase family.</text>
</comment>
<organism>
    <name type="scientific">Vibrio parahaemolyticus serotype O3:K6 (strain RIMD 2210633)</name>
    <dbReference type="NCBI Taxonomy" id="223926"/>
    <lineage>
        <taxon>Bacteria</taxon>
        <taxon>Pseudomonadati</taxon>
        <taxon>Pseudomonadota</taxon>
        <taxon>Gammaproteobacteria</taxon>
        <taxon>Vibrionales</taxon>
        <taxon>Vibrionaceae</taxon>
        <taxon>Vibrio</taxon>
    </lineage>
</organism>